<proteinExistence type="evidence at transcript level"/>
<feature type="chain" id="PRO_0000114636" description="Dynein heavy chain, cytoplasmic">
    <location>
        <begin position="1"/>
        <end position="4639"/>
    </location>
</feature>
<feature type="region of interest" description="Stem" evidence="1">
    <location>
        <begin position="1"/>
        <end position="1856"/>
    </location>
</feature>
<feature type="region of interest" description="AAA 1" evidence="1">
    <location>
        <begin position="1857"/>
        <end position="2084"/>
    </location>
</feature>
<feature type="region of interest" description="AAA 2" evidence="1">
    <location>
        <begin position="2166"/>
        <end position="2437"/>
    </location>
</feature>
<feature type="region of interest" description="AAA 3" evidence="1">
    <location>
        <begin position="2541"/>
        <end position="2790"/>
    </location>
</feature>
<feature type="region of interest" description="AAA 4" evidence="1">
    <location>
        <begin position="2884"/>
        <end position="3153"/>
    </location>
</feature>
<feature type="region of interest" description="Stalk" evidence="1">
    <location>
        <begin position="3189"/>
        <end position="3478"/>
    </location>
</feature>
<feature type="region of interest" description="AAA 5" evidence="1">
    <location>
        <begin position="3539"/>
        <end position="3768"/>
    </location>
</feature>
<feature type="region of interest" description="AAA 6" evidence="1">
    <location>
        <begin position="3989"/>
        <end position="4205"/>
    </location>
</feature>
<feature type="coiled-coil region" evidence="2">
    <location>
        <begin position="530"/>
        <end position="565"/>
    </location>
</feature>
<feature type="coiled-coil region" evidence="2">
    <location>
        <begin position="774"/>
        <end position="794"/>
    </location>
</feature>
<feature type="coiled-coil region" evidence="2">
    <location>
        <begin position="1264"/>
        <end position="1368"/>
    </location>
</feature>
<feature type="coiled-coil region" evidence="2">
    <location>
        <begin position="3189"/>
        <end position="3261"/>
    </location>
</feature>
<feature type="coiled-coil region" evidence="2">
    <location>
        <begin position="3382"/>
        <end position="3478"/>
    </location>
</feature>
<feature type="coiled-coil region" evidence="2">
    <location>
        <begin position="3723"/>
        <end position="3782"/>
    </location>
</feature>
<feature type="binding site" evidence="2">
    <location>
        <begin position="1895"/>
        <end position="1902"/>
    </location>
    <ligand>
        <name>ATP</name>
        <dbReference type="ChEBI" id="CHEBI:30616"/>
    </ligand>
</feature>
<feature type="binding site" evidence="2">
    <location>
        <begin position="2210"/>
        <end position="2217"/>
    </location>
    <ligand>
        <name>ATP</name>
        <dbReference type="ChEBI" id="CHEBI:30616"/>
    </ligand>
</feature>
<feature type="binding site" evidence="2">
    <location>
        <begin position="2580"/>
        <end position="2587"/>
    </location>
    <ligand>
        <name>ATP</name>
        <dbReference type="ChEBI" id="CHEBI:30616"/>
    </ligand>
</feature>
<feature type="binding site" evidence="2">
    <location>
        <begin position="2922"/>
        <end position="2929"/>
    </location>
    <ligand>
        <name>ATP</name>
        <dbReference type="ChEBI" id="CHEBI:30616"/>
    </ligand>
</feature>
<feature type="splice variant" id="VSP_012085" description="In isoform C." evidence="3">
    <original>KSIRKQQLVEVRTMANPPSVVKLALESICLLLGENATDWKSIRAVIMRENFINSIVSNFGTEN</original>
    <variation>SSIKKKHLAEVRSMANPPAVVKLALESVCELLNESATDWKAIRGILVKDSFISSIVNLETDK</variation>
    <location>
        <begin position="3282"/>
        <end position="3344"/>
    </location>
</feature>
<feature type="sequence conflict" description="In Ref. 1; AAA60323." evidence="3" ref="1">
    <original>A</original>
    <variation>V</variation>
    <location>
        <position position="151"/>
    </location>
</feature>
<feature type="sequence conflict" description="In Ref. 1; AAA60323." evidence="3" ref="1">
    <original>R</original>
    <variation>H</variation>
    <location>
        <position position="2010"/>
    </location>
</feature>
<feature type="sequence conflict" description="In Ref. 1; AAA60323." evidence="3" ref="1">
    <original>V</original>
    <variation>A</variation>
    <location>
        <position position="2348"/>
    </location>
</feature>
<feature type="sequence conflict" description="In Ref. 1; AAA60323." evidence="3" ref="1">
    <original>S</original>
    <variation>T</variation>
    <location>
        <position position="2370"/>
    </location>
</feature>
<feature type="sequence conflict" description="In Ref. 1; AAA60323." evidence="3" ref="1">
    <original>S</original>
    <variation>T</variation>
    <location>
        <position position="2549"/>
    </location>
</feature>
<feature type="sequence conflict" description="In Ref. 1; AAA60323." evidence="3" ref="1">
    <original>I</original>
    <variation>N</variation>
    <location>
        <position position="3864"/>
    </location>
</feature>
<feature type="sequence conflict" description="In Ref. 5; AAK92925." evidence="3" ref="5">
    <original>K</original>
    <variation>N</variation>
    <location>
        <position position="4073"/>
    </location>
</feature>
<feature type="sequence conflict" description="In Ref. 1; AAA60323." evidence="3" ref="1">
    <original>T</original>
    <variation>A</variation>
    <location>
        <position position="4369"/>
    </location>
</feature>
<organism>
    <name type="scientific">Drosophila melanogaster</name>
    <name type="common">Fruit fly</name>
    <dbReference type="NCBI Taxonomy" id="7227"/>
    <lineage>
        <taxon>Eukaryota</taxon>
        <taxon>Metazoa</taxon>
        <taxon>Ecdysozoa</taxon>
        <taxon>Arthropoda</taxon>
        <taxon>Hexapoda</taxon>
        <taxon>Insecta</taxon>
        <taxon>Pterygota</taxon>
        <taxon>Neoptera</taxon>
        <taxon>Endopterygota</taxon>
        <taxon>Diptera</taxon>
        <taxon>Brachycera</taxon>
        <taxon>Muscomorpha</taxon>
        <taxon>Ephydroidea</taxon>
        <taxon>Drosophilidae</taxon>
        <taxon>Drosophila</taxon>
        <taxon>Sophophora</taxon>
    </lineage>
</organism>
<evidence type="ECO:0000250" key="1"/>
<evidence type="ECO:0000255" key="2"/>
<evidence type="ECO:0000305" key="3"/>
<dbReference type="EMBL" id="L23195">
    <property type="protein sequence ID" value="AAA60323.1"/>
    <property type="molecule type" value="mRNA"/>
</dbReference>
<dbReference type="EMBL" id="AE014296">
    <property type="protein sequence ID" value="AAF47942.3"/>
    <property type="molecule type" value="Genomic_DNA"/>
</dbReference>
<dbReference type="EMBL" id="AE014296">
    <property type="protein sequence ID" value="AAN11615.2"/>
    <property type="molecule type" value="Genomic_DNA"/>
</dbReference>
<dbReference type="EMBL" id="L25122">
    <property type="protein sequence ID" value="AAA28492.1"/>
    <property type="molecule type" value="mRNA"/>
</dbReference>
<dbReference type="EMBL" id="AY051501">
    <property type="protein sequence ID" value="AAK92925.1"/>
    <property type="status" value="ALT_INIT"/>
    <property type="molecule type" value="mRNA"/>
</dbReference>
<dbReference type="PIR" id="A54794">
    <property type="entry name" value="A54794"/>
</dbReference>
<dbReference type="RefSeq" id="NP_523929.2">
    <molecule id="P37276-1"/>
    <property type="nucleotide sequence ID" value="NM_079205.4"/>
</dbReference>
<dbReference type="RefSeq" id="NP_729034.2">
    <molecule id="P37276-2"/>
    <property type="nucleotide sequence ID" value="NM_168103.3"/>
</dbReference>
<dbReference type="SMR" id="P37276"/>
<dbReference type="BioGRID" id="64049">
    <property type="interactions" value="39"/>
</dbReference>
<dbReference type="DIP" id="DIP-59317N"/>
<dbReference type="FunCoup" id="P37276">
    <property type="interactions" value="1696"/>
</dbReference>
<dbReference type="IntAct" id="P37276">
    <property type="interactions" value="5"/>
</dbReference>
<dbReference type="STRING" id="7227.FBpp0304991"/>
<dbReference type="GlyGen" id="P37276">
    <property type="glycosylation" value="1 site"/>
</dbReference>
<dbReference type="PaxDb" id="7227-FBpp0304991"/>
<dbReference type="EnsemblMetazoa" id="FBtr0073359">
    <molecule id="P37276-1"/>
    <property type="protein sequence ID" value="FBpp0073215"/>
    <property type="gene ID" value="FBgn0261797"/>
</dbReference>
<dbReference type="EnsemblMetazoa" id="FBtr0273370">
    <molecule id="P37276-2"/>
    <property type="protein sequence ID" value="FBpp0271878"/>
    <property type="gene ID" value="FBgn0261797"/>
</dbReference>
<dbReference type="GeneID" id="38580"/>
<dbReference type="KEGG" id="dme:Dmel_CG7507"/>
<dbReference type="AGR" id="FB:FBgn0261797"/>
<dbReference type="CTD" id="38580"/>
<dbReference type="FlyBase" id="FBgn0261797">
    <property type="gene designation" value="Dhc64C"/>
</dbReference>
<dbReference type="VEuPathDB" id="VectorBase:FBgn0261797"/>
<dbReference type="eggNOG" id="KOG3595">
    <property type="taxonomic scope" value="Eukaryota"/>
</dbReference>
<dbReference type="GeneTree" id="ENSGT00940000156103"/>
<dbReference type="InParanoid" id="P37276"/>
<dbReference type="OrthoDB" id="14187at2759"/>
<dbReference type="PhylomeDB" id="P37276"/>
<dbReference type="Reactome" id="R-DME-3371497">
    <property type="pathway name" value="HSP90 chaperone cycle for steroid hormone receptors (SHR) in the presence of ligand"/>
</dbReference>
<dbReference type="Reactome" id="R-DME-6798695">
    <property type="pathway name" value="Neutrophil degranulation"/>
</dbReference>
<dbReference type="Reactome" id="R-DME-6807878">
    <property type="pathway name" value="COPI-mediated anterograde transport"/>
</dbReference>
<dbReference type="Reactome" id="R-DME-6811436">
    <property type="pathway name" value="COPI-independent Golgi-to-ER retrograde traffic"/>
</dbReference>
<dbReference type="Reactome" id="R-DME-9646399">
    <property type="pathway name" value="Aggrephagy"/>
</dbReference>
<dbReference type="BioGRID-ORCS" id="38580">
    <property type="hits" value="0 hits in 1 CRISPR screen"/>
</dbReference>
<dbReference type="CD-CODE" id="2838EF58">
    <property type="entry name" value="Centrosome"/>
</dbReference>
<dbReference type="GenomeRNAi" id="38580"/>
<dbReference type="PRO" id="PR:P37276"/>
<dbReference type="Proteomes" id="UP000000803">
    <property type="component" value="Chromosome 3L"/>
</dbReference>
<dbReference type="Bgee" id="FBgn0261797">
    <property type="expression patterns" value="Expressed in eye disc (Drosophila) and 197 other cell types or tissues"/>
</dbReference>
<dbReference type="ExpressionAtlas" id="P37276">
    <property type="expression patterns" value="baseline and differential"/>
</dbReference>
<dbReference type="GO" id="GO:1904115">
    <property type="term" value="C:axon cytoplasm"/>
    <property type="evidence" value="ECO:0000314"/>
    <property type="project" value="FlyBase"/>
</dbReference>
<dbReference type="GO" id="GO:0005938">
    <property type="term" value="C:cell cortex"/>
    <property type="evidence" value="ECO:0000314"/>
    <property type="project" value="FlyBase"/>
</dbReference>
<dbReference type="GO" id="GO:0005737">
    <property type="term" value="C:cytoplasm"/>
    <property type="evidence" value="ECO:0000314"/>
    <property type="project" value="FlyBase"/>
</dbReference>
<dbReference type="GO" id="GO:0005868">
    <property type="term" value="C:cytoplasmic dynein complex"/>
    <property type="evidence" value="ECO:0000250"/>
    <property type="project" value="FlyBase"/>
</dbReference>
<dbReference type="GO" id="GO:0005881">
    <property type="term" value="C:cytoplasmic microtubule"/>
    <property type="evidence" value="ECO:0000318"/>
    <property type="project" value="GO_Central"/>
</dbReference>
<dbReference type="GO" id="GO:0030286">
    <property type="term" value="C:dynein complex"/>
    <property type="evidence" value="ECO:0000353"/>
    <property type="project" value="FlyBase"/>
</dbReference>
<dbReference type="GO" id="GO:0045169">
    <property type="term" value="C:fusome"/>
    <property type="evidence" value="ECO:0000304"/>
    <property type="project" value="FlyBase"/>
</dbReference>
<dbReference type="GO" id="GO:0005794">
    <property type="term" value="C:Golgi apparatus"/>
    <property type="evidence" value="ECO:0000314"/>
    <property type="project" value="FlyBase"/>
</dbReference>
<dbReference type="GO" id="GO:0000776">
    <property type="term" value="C:kinetochore"/>
    <property type="evidence" value="ECO:0000314"/>
    <property type="project" value="FlyBase"/>
</dbReference>
<dbReference type="GO" id="GO:0005875">
    <property type="term" value="C:microtubule associated complex"/>
    <property type="evidence" value="ECO:0000314"/>
    <property type="project" value="FlyBase"/>
</dbReference>
<dbReference type="GO" id="GO:0061803">
    <property type="term" value="C:posterior cell cortex"/>
    <property type="evidence" value="ECO:0000314"/>
    <property type="project" value="FlyBase"/>
</dbReference>
<dbReference type="GO" id="GO:1990904">
    <property type="term" value="C:ribonucleoprotein complex"/>
    <property type="evidence" value="ECO:0000314"/>
    <property type="project" value="FlyBase"/>
</dbReference>
<dbReference type="GO" id="GO:0005524">
    <property type="term" value="F:ATP binding"/>
    <property type="evidence" value="ECO:0007669"/>
    <property type="project" value="UniProtKB-KW"/>
</dbReference>
<dbReference type="GO" id="GO:0016887">
    <property type="term" value="F:ATP hydrolysis activity"/>
    <property type="evidence" value="ECO:0007669"/>
    <property type="project" value="InterPro"/>
</dbReference>
<dbReference type="GO" id="GO:0045505">
    <property type="term" value="F:dynein intermediate chain binding"/>
    <property type="evidence" value="ECO:0000250"/>
    <property type="project" value="FlyBase"/>
</dbReference>
<dbReference type="GO" id="GO:0051959">
    <property type="term" value="F:dynein light intermediate chain binding"/>
    <property type="evidence" value="ECO:0000250"/>
    <property type="project" value="FlyBase"/>
</dbReference>
<dbReference type="GO" id="GO:0003777">
    <property type="term" value="F:microtubule motor activity"/>
    <property type="evidence" value="ECO:0000314"/>
    <property type="project" value="FlyBase"/>
</dbReference>
<dbReference type="GO" id="GO:0008569">
    <property type="term" value="F:minus-end-directed microtubule motor activity"/>
    <property type="evidence" value="ECO:0000250"/>
    <property type="project" value="FlyBase"/>
</dbReference>
<dbReference type="GO" id="GO:0008088">
    <property type="term" value="P:axo-dendritic transport"/>
    <property type="evidence" value="ECO:0000315"/>
    <property type="project" value="FlyBase"/>
</dbReference>
<dbReference type="GO" id="GO:0007298">
    <property type="term" value="P:border follicle cell migration"/>
    <property type="evidence" value="ECO:0000315"/>
    <property type="project" value="FlyBase"/>
</dbReference>
<dbReference type="GO" id="GO:0007349">
    <property type="term" value="P:cellularization"/>
    <property type="evidence" value="ECO:0000315"/>
    <property type="project" value="FlyBase"/>
</dbReference>
<dbReference type="GO" id="GO:0007098">
    <property type="term" value="P:centrosome cycle"/>
    <property type="evidence" value="ECO:0000315"/>
    <property type="project" value="FlyBase"/>
</dbReference>
<dbReference type="GO" id="GO:0051642">
    <property type="term" value="P:centrosome localization"/>
    <property type="evidence" value="ECO:0000315"/>
    <property type="project" value="FlyBase"/>
</dbReference>
<dbReference type="GO" id="GO:0040003">
    <property type="term" value="P:chitin-based cuticle development"/>
    <property type="evidence" value="ECO:0000316"/>
    <property type="project" value="FlyBase"/>
</dbReference>
<dbReference type="GO" id="GO:0007282">
    <property type="term" value="P:cystoblast division"/>
    <property type="evidence" value="ECO:0000315"/>
    <property type="project" value="FlyBase"/>
</dbReference>
<dbReference type="GO" id="GO:0031122">
    <property type="term" value="P:cytoplasmic microtubule organization"/>
    <property type="evidence" value="ECO:0000318"/>
    <property type="project" value="GO_Central"/>
</dbReference>
<dbReference type="GO" id="GO:0048813">
    <property type="term" value="P:dendrite morphogenesis"/>
    <property type="evidence" value="ECO:0000315"/>
    <property type="project" value="FlyBase"/>
</dbReference>
<dbReference type="GO" id="GO:0045198">
    <property type="term" value="P:establishment of epithelial cell apical/basal polarity"/>
    <property type="evidence" value="ECO:0000314"/>
    <property type="project" value="FlyBase"/>
</dbReference>
<dbReference type="GO" id="GO:0051683">
    <property type="term" value="P:establishment of Golgi localization"/>
    <property type="evidence" value="ECO:0000315"/>
    <property type="project" value="FlyBase"/>
</dbReference>
<dbReference type="GO" id="GO:0040001">
    <property type="term" value="P:establishment of mitotic spindle localization"/>
    <property type="evidence" value="ECO:0000304"/>
    <property type="project" value="FlyBase"/>
</dbReference>
<dbReference type="GO" id="GO:0045197">
    <property type="term" value="P:establishment or maintenance of epithelial cell apical/basal polarity"/>
    <property type="evidence" value="ECO:0000315"/>
    <property type="project" value="FlyBase"/>
</dbReference>
<dbReference type="GO" id="GO:0045478">
    <property type="term" value="P:fusome organization"/>
    <property type="evidence" value="ECO:0000304"/>
    <property type="project" value="FlyBase"/>
</dbReference>
<dbReference type="GO" id="GO:0048134">
    <property type="term" value="P:germ-line cyst formation"/>
    <property type="evidence" value="ECO:0000304"/>
    <property type="project" value="FlyBase"/>
</dbReference>
<dbReference type="GO" id="GO:0007294">
    <property type="term" value="P:germarium-derived oocyte fate determination"/>
    <property type="evidence" value="ECO:0000315"/>
    <property type="project" value="FlyBase"/>
</dbReference>
<dbReference type="GO" id="GO:0008298">
    <property type="term" value="P:intracellular mRNA localization"/>
    <property type="evidence" value="ECO:0000304"/>
    <property type="project" value="FlyBase"/>
</dbReference>
<dbReference type="GO" id="GO:0006886">
    <property type="term" value="P:intracellular protein transport"/>
    <property type="evidence" value="ECO:0000315"/>
    <property type="project" value="FlyBase"/>
</dbReference>
<dbReference type="GO" id="GO:0035149">
    <property type="term" value="P:lumen formation, open tracheal system"/>
    <property type="evidence" value="ECO:0000315"/>
    <property type="project" value="UniProtKB"/>
</dbReference>
<dbReference type="GO" id="GO:0051237">
    <property type="term" value="P:maintenance of RNA location"/>
    <property type="evidence" value="ECO:0000314"/>
    <property type="project" value="FlyBase"/>
</dbReference>
<dbReference type="GO" id="GO:0035011">
    <property type="term" value="P:melanotic encapsulation of foreign target"/>
    <property type="evidence" value="ECO:0000315"/>
    <property type="project" value="FlyBase"/>
</dbReference>
<dbReference type="GO" id="GO:0007018">
    <property type="term" value="P:microtubule-based movement"/>
    <property type="evidence" value="ECO:0000314"/>
    <property type="project" value="FlyBase"/>
</dbReference>
<dbReference type="GO" id="GO:0048311">
    <property type="term" value="P:mitochondrion distribution"/>
    <property type="evidence" value="ECO:0000315"/>
    <property type="project" value="FlyBase"/>
</dbReference>
<dbReference type="GO" id="GO:0000278">
    <property type="term" value="P:mitotic cell cycle"/>
    <property type="evidence" value="ECO:0000315"/>
    <property type="project" value="FlyBase"/>
</dbReference>
<dbReference type="GO" id="GO:0007052">
    <property type="term" value="P:mitotic spindle organization"/>
    <property type="evidence" value="ECO:0000315"/>
    <property type="project" value="FlyBase"/>
</dbReference>
<dbReference type="GO" id="GO:0016319">
    <property type="term" value="P:mushroom body development"/>
    <property type="evidence" value="ECO:0000315"/>
    <property type="project" value="FlyBase"/>
</dbReference>
<dbReference type="GO" id="GO:0007405">
    <property type="term" value="P:neuroblast proliferation"/>
    <property type="evidence" value="ECO:0000315"/>
    <property type="project" value="FlyBase"/>
</dbReference>
<dbReference type="GO" id="GO:0007097">
    <property type="term" value="P:nuclear migration"/>
    <property type="evidence" value="ECO:0000318"/>
    <property type="project" value="GO_Central"/>
</dbReference>
<dbReference type="GO" id="GO:0007312">
    <property type="term" value="P:oocyte nucleus migration involved in oocyte dorsal/ventral axis specification"/>
    <property type="evidence" value="ECO:0000304"/>
    <property type="project" value="FlyBase"/>
</dbReference>
<dbReference type="GO" id="GO:0048477">
    <property type="term" value="P:oogenesis"/>
    <property type="evidence" value="ECO:0000315"/>
    <property type="project" value="FlyBase"/>
</dbReference>
<dbReference type="GO" id="GO:0030723">
    <property type="term" value="P:ovarian fusome organization"/>
    <property type="evidence" value="ECO:0000315"/>
    <property type="project" value="FlyBase"/>
</dbReference>
<dbReference type="GO" id="GO:0007279">
    <property type="term" value="P:pole cell formation"/>
    <property type="evidence" value="ECO:0000315"/>
    <property type="project" value="FlyBase"/>
</dbReference>
<dbReference type="GO" id="GO:0046604">
    <property type="term" value="P:positive regulation of mitotic centrosome separation"/>
    <property type="evidence" value="ECO:0000315"/>
    <property type="project" value="FlyBase"/>
</dbReference>
<dbReference type="GO" id="GO:1904801">
    <property type="term" value="P:positive regulation of neuron remodeling"/>
    <property type="evidence" value="ECO:0000315"/>
    <property type="project" value="FlyBase"/>
</dbReference>
<dbReference type="GO" id="GO:0034501">
    <property type="term" value="P:protein localization to kinetochore"/>
    <property type="evidence" value="ECO:0000315"/>
    <property type="project" value="FlyBase"/>
</dbReference>
<dbReference type="GO" id="GO:0030071">
    <property type="term" value="P:regulation of mitotic metaphase/anaphase transition"/>
    <property type="evidence" value="ECO:0000315"/>
    <property type="project" value="FlyBase"/>
</dbReference>
<dbReference type="GO" id="GO:0008090">
    <property type="term" value="P:retrograde axonal transport"/>
    <property type="evidence" value="ECO:0000315"/>
    <property type="project" value="FlyBase"/>
</dbReference>
<dbReference type="GO" id="GO:0098958">
    <property type="term" value="P:retrograde axonal transport of mitochondrion"/>
    <property type="evidence" value="ECO:0000315"/>
    <property type="project" value="FlyBase"/>
</dbReference>
<dbReference type="GO" id="GO:0050658">
    <property type="term" value="P:RNA transport"/>
    <property type="evidence" value="ECO:0000315"/>
    <property type="project" value="FlyBase"/>
</dbReference>
<dbReference type="GO" id="GO:0007051">
    <property type="term" value="P:spindle organization"/>
    <property type="evidence" value="ECO:0000315"/>
    <property type="project" value="FlyBase"/>
</dbReference>
<dbReference type="GO" id="GO:0034063">
    <property type="term" value="P:stress granule assembly"/>
    <property type="evidence" value="ECO:0000315"/>
    <property type="project" value="BHF-UCL"/>
</dbReference>
<dbReference type="CDD" id="cd00009">
    <property type="entry name" value="AAA"/>
    <property type="match status" value="2"/>
</dbReference>
<dbReference type="FunFam" id="1.20.920.20:FF:000002">
    <property type="entry name" value="Cytoplasmic dynein 1 heavy chain"/>
    <property type="match status" value="1"/>
</dbReference>
<dbReference type="FunFam" id="3.40.50.300:FF:000122">
    <property type="entry name" value="Cytoplasmic dynein 1 heavy chain"/>
    <property type="match status" value="1"/>
</dbReference>
<dbReference type="FunFam" id="1.10.8.1220:FF:000002">
    <property type="entry name" value="cytoplasmic dynein 1 heavy chain 1-like"/>
    <property type="match status" value="1"/>
</dbReference>
<dbReference type="FunFam" id="1.10.287.2620:FF:000001">
    <property type="entry name" value="Cytoplasmic dynein heavy chain 1"/>
    <property type="match status" value="1"/>
</dbReference>
<dbReference type="FunFam" id="1.10.472.130:FF:000002">
    <property type="entry name" value="Cytoplasmic dynein heavy chain 1"/>
    <property type="match status" value="1"/>
</dbReference>
<dbReference type="FunFam" id="1.10.8.710:FF:000005">
    <property type="entry name" value="Cytoplasmic dynein heavy chain 1"/>
    <property type="match status" value="1"/>
</dbReference>
<dbReference type="FunFam" id="1.20.140.100:FF:000002">
    <property type="entry name" value="Cytoplasmic dynein heavy chain 1"/>
    <property type="match status" value="1"/>
</dbReference>
<dbReference type="FunFam" id="1.20.58.1120:FF:000003">
    <property type="entry name" value="Cytoplasmic dynein heavy chain 1"/>
    <property type="match status" value="1"/>
</dbReference>
<dbReference type="FunFam" id="1.20.920.30:FF:000001">
    <property type="entry name" value="Cytoplasmic dynein heavy chain 1"/>
    <property type="match status" value="1"/>
</dbReference>
<dbReference type="FunFam" id="3.20.180.20:FF:000002">
    <property type="entry name" value="Cytoplasmic dynein heavy chain 1"/>
    <property type="match status" value="1"/>
</dbReference>
<dbReference type="FunFam" id="3.40.50.300:FF:000071">
    <property type="entry name" value="Cytoplasmic dynein heavy chain 1"/>
    <property type="match status" value="1"/>
</dbReference>
<dbReference type="FunFam" id="3.40.50.300:FF:000517">
    <property type="entry name" value="Cytoplasmic dynein heavy chain 1"/>
    <property type="match status" value="1"/>
</dbReference>
<dbReference type="FunFam" id="1.10.8.720:FF:000003">
    <property type="entry name" value="Cytoplasmic dynein heavy chain 2"/>
    <property type="match status" value="1"/>
</dbReference>
<dbReference type="FunFam" id="1.20.1270.280:FF:000004">
    <property type="entry name" value="Cytoplasmic dynein heavy chain 2"/>
    <property type="match status" value="1"/>
</dbReference>
<dbReference type="FunFam" id="3.10.490.20:FF:000004">
    <property type="entry name" value="Cytoplasmic dynein heavy chain 2"/>
    <property type="match status" value="1"/>
</dbReference>
<dbReference type="FunFam" id="3.40.50.300:FF:000373">
    <property type="entry name" value="Cytoplasmic dynein heavy chain 2"/>
    <property type="match status" value="1"/>
</dbReference>
<dbReference type="FunFam" id="3.40.50.300:FF:001956">
    <property type="entry name" value="Dynein cytoplasmic 1 heavy chain 1"/>
    <property type="match status" value="1"/>
</dbReference>
<dbReference type="FunFam" id="3.40.50.300:FF:000075">
    <property type="entry name" value="Dynein heavy chain, cytoplasmic"/>
    <property type="match status" value="1"/>
</dbReference>
<dbReference type="Gene3D" id="1.10.287.2620">
    <property type="match status" value="1"/>
</dbReference>
<dbReference type="Gene3D" id="1.10.472.130">
    <property type="match status" value="1"/>
</dbReference>
<dbReference type="Gene3D" id="1.10.8.1220">
    <property type="match status" value="1"/>
</dbReference>
<dbReference type="Gene3D" id="1.10.8.710">
    <property type="match status" value="1"/>
</dbReference>
<dbReference type="Gene3D" id="1.20.1270.280">
    <property type="match status" value="1"/>
</dbReference>
<dbReference type="Gene3D" id="1.20.58.1120">
    <property type="match status" value="1"/>
</dbReference>
<dbReference type="Gene3D" id="1.20.920.20">
    <property type="match status" value="2"/>
</dbReference>
<dbReference type="Gene3D" id="1.20.920.30">
    <property type="match status" value="1"/>
</dbReference>
<dbReference type="Gene3D" id="3.10.490.20">
    <property type="match status" value="1"/>
</dbReference>
<dbReference type="Gene3D" id="6.10.140.1060">
    <property type="match status" value="1"/>
</dbReference>
<dbReference type="Gene3D" id="1.20.140.100">
    <property type="entry name" value="Dynein heavy chain, N-terminal domain 2"/>
    <property type="match status" value="1"/>
</dbReference>
<dbReference type="Gene3D" id="3.20.180.20">
    <property type="entry name" value="Dynein heavy chain, N-terminal domain 2"/>
    <property type="match status" value="1"/>
</dbReference>
<dbReference type="Gene3D" id="3.40.50.300">
    <property type="entry name" value="P-loop containing nucleotide triphosphate hydrolases"/>
    <property type="match status" value="5"/>
</dbReference>
<dbReference type="Gene3D" id="1.10.8.720">
    <property type="entry name" value="Region D6 of dynein motor"/>
    <property type="match status" value="1"/>
</dbReference>
<dbReference type="InterPro" id="IPR003593">
    <property type="entry name" value="AAA+_ATPase"/>
</dbReference>
<dbReference type="InterPro" id="IPR035699">
    <property type="entry name" value="AAA_6"/>
</dbReference>
<dbReference type="InterPro" id="IPR035706">
    <property type="entry name" value="AAA_9"/>
</dbReference>
<dbReference type="InterPro" id="IPR041658">
    <property type="entry name" value="AAA_lid_11"/>
</dbReference>
<dbReference type="InterPro" id="IPR042219">
    <property type="entry name" value="AAA_lid_11_sf"/>
</dbReference>
<dbReference type="InterPro" id="IPR026983">
    <property type="entry name" value="DHC"/>
</dbReference>
<dbReference type="InterPro" id="IPR054354">
    <property type="entry name" value="DYNC2H1-like_lid"/>
</dbReference>
<dbReference type="InterPro" id="IPR042222">
    <property type="entry name" value="Dynein_2_N"/>
</dbReference>
<dbReference type="InterPro" id="IPR043157">
    <property type="entry name" value="Dynein_AAA1S"/>
</dbReference>
<dbReference type="InterPro" id="IPR041466">
    <property type="entry name" value="Dynein_AAA5_ext"/>
</dbReference>
<dbReference type="InterPro" id="IPR041228">
    <property type="entry name" value="Dynein_C"/>
</dbReference>
<dbReference type="InterPro" id="IPR043160">
    <property type="entry name" value="Dynein_C_barrel"/>
</dbReference>
<dbReference type="InterPro" id="IPR024743">
    <property type="entry name" value="Dynein_HC_stalk"/>
</dbReference>
<dbReference type="InterPro" id="IPR024317">
    <property type="entry name" value="Dynein_heavy_chain_D4_dom"/>
</dbReference>
<dbReference type="InterPro" id="IPR004273">
    <property type="entry name" value="Dynein_heavy_D6_P-loop"/>
</dbReference>
<dbReference type="InterPro" id="IPR013602">
    <property type="entry name" value="Dynein_heavy_linker"/>
</dbReference>
<dbReference type="InterPro" id="IPR013594">
    <property type="entry name" value="Dynein_heavy_tail"/>
</dbReference>
<dbReference type="InterPro" id="IPR042228">
    <property type="entry name" value="Dynein_linker_3"/>
</dbReference>
<dbReference type="InterPro" id="IPR027417">
    <property type="entry name" value="P-loop_NTPase"/>
</dbReference>
<dbReference type="PANTHER" id="PTHR46532:SF13">
    <property type="entry name" value="CYTOPLASMIC DYNEIN 1 HEAVY CHAIN 1"/>
    <property type="match status" value="1"/>
</dbReference>
<dbReference type="PANTHER" id="PTHR46532">
    <property type="entry name" value="MALE FERTILITY FACTOR KL5"/>
    <property type="match status" value="1"/>
</dbReference>
<dbReference type="Pfam" id="PF12774">
    <property type="entry name" value="AAA_6"/>
    <property type="match status" value="1"/>
</dbReference>
<dbReference type="Pfam" id="PF12775">
    <property type="entry name" value="AAA_7"/>
    <property type="match status" value="1"/>
</dbReference>
<dbReference type="Pfam" id="PF12780">
    <property type="entry name" value="AAA_8"/>
    <property type="match status" value="1"/>
</dbReference>
<dbReference type="Pfam" id="PF12781">
    <property type="entry name" value="AAA_9"/>
    <property type="match status" value="1"/>
</dbReference>
<dbReference type="Pfam" id="PF18198">
    <property type="entry name" value="AAA_lid_11"/>
    <property type="match status" value="1"/>
</dbReference>
<dbReference type="Pfam" id="PF08385">
    <property type="entry name" value="DHC_N1"/>
    <property type="match status" value="1"/>
</dbReference>
<dbReference type="Pfam" id="PF08393">
    <property type="entry name" value="DHC_N2"/>
    <property type="match status" value="1"/>
</dbReference>
<dbReference type="Pfam" id="PF22597">
    <property type="entry name" value="DYN_lid"/>
    <property type="match status" value="1"/>
</dbReference>
<dbReference type="Pfam" id="PF17852">
    <property type="entry name" value="Dynein_AAA_lid"/>
    <property type="match status" value="1"/>
</dbReference>
<dbReference type="Pfam" id="PF18199">
    <property type="entry name" value="Dynein_C"/>
    <property type="match status" value="1"/>
</dbReference>
<dbReference type="Pfam" id="PF03028">
    <property type="entry name" value="Dynein_heavy"/>
    <property type="match status" value="1"/>
</dbReference>
<dbReference type="Pfam" id="PF12777">
    <property type="entry name" value="MT"/>
    <property type="match status" value="1"/>
</dbReference>
<dbReference type="SMART" id="SM00382">
    <property type="entry name" value="AAA"/>
    <property type="match status" value="4"/>
</dbReference>
<dbReference type="SUPFAM" id="SSF52540">
    <property type="entry name" value="P-loop containing nucleoside triphosphate hydrolases"/>
    <property type="match status" value="4"/>
</dbReference>
<accession>P37276</accession>
<accession>Q8IRA5</accession>
<accession>Q961M8</accession>
<accession>Q9VZ83</accession>
<reference key="1">
    <citation type="journal article" date="1994" name="J. Cell Biol.">
        <title>Drosophila cytoplasmic dynein, a microtubule motor that is asymmetrically localized in the oocyte.</title>
        <authorList>
            <person name="Li M."/>
            <person name="McGrail M."/>
            <person name="Serr M."/>
            <person name="Hays T.S."/>
        </authorList>
    </citation>
    <scope>NUCLEOTIDE SEQUENCE [MRNA] (ISOFORM A)</scope>
    <source>
        <tissue>Embryo</tissue>
    </source>
</reference>
<reference key="2">
    <citation type="journal article" date="2000" name="Science">
        <title>The genome sequence of Drosophila melanogaster.</title>
        <authorList>
            <person name="Adams M.D."/>
            <person name="Celniker S.E."/>
            <person name="Holt R.A."/>
            <person name="Evans C.A."/>
            <person name="Gocayne J.D."/>
            <person name="Amanatides P.G."/>
            <person name="Scherer S.E."/>
            <person name="Li P.W."/>
            <person name="Hoskins R.A."/>
            <person name="Galle R.F."/>
            <person name="George R.A."/>
            <person name="Lewis S.E."/>
            <person name="Richards S."/>
            <person name="Ashburner M."/>
            <person name="Henderson S.N."/>
            <person name="Sutton G.G."/>
            <person name="Wortman J.R."/>
            <person name="Yandell M.D."/>
            <person name="Zhang Q."/>
            <person name="Chen L.X."/>
            <person name="Brandon R.C."/>
            <person name="Rogers Y.-H.C."/>
            <person name="Blazej R.G."/>
            <person name="Champe M."/>
            <person name="Pfeiffer B.D."/>
            <person name="Wan K.H."/>
            <person name="Doyle C."/>
            <person name="Baxter E.G."/>
            <person name="Helt G."/>
            <person name="Nelson C.R."/>
            <person name="Miklos G.L.G."/>
            <person name="Abril J.F."/>
            <person name="Agbayani A."/>
            <person name="An H.-J."/>
            <person name="Andrews-Pfannkoch C."/>
            <person name="Baldwin D."/>
            <person name="Ballew R.M."/>
            <person name="Basu A."/>
            <person name="Baxendale J."/>
            <person name="Bayraktaroglu L."/>
            <person name="Beasley E.M."/>
            <person name="Beeson K.Y."/>
            <person name="Benos P.V."/>
            <person name="Berman B.P."/>
            <person name="Bhandari D."/>
            <person name="Bolshakov S."/>
            <person name="Borkova D."/>
            <person name="Botchan M.R."/>
            <person name="Bouck J."/>
            <person name="Brokstein P."/>
            <person name="Brottier P."/>
            <person name="Burtis K.C."/>
            <person name="Busam D.A."/>
            <person name="Butler H."/>
            <person name="Cadieu E."/>
            <person name="Center A."/>
            <person name="Chandra I."/>
            <person name="Cherry J.M."/>
            <person name="Cawley S."/>
            <person name="Dahlke C."/>
            <person name="Davenport L.B."/>
            <person name="Davies P."/>
            <person name="de Pablos B."/>
            <person name="Delcher A."/>
            <person name="Deng Z."/>
            <person name="Mays A.D."/>
            <person name="Dew I."/>
            <person name="Dietz S.M."/>
            <person name="Dodson K."/>
            <person name="Doup L.E."/>
            <person name="Downes M."/>
            <person name="Dugan-Rocha S."/>
            <person name="Dunkov B.C."/>
            <person name="Dunn P."/>
            <person name="Durbin K.J."/>
            <person name="Evangelista C.C."/>
            <person name="Ferraz C."/>
            <person name="Ferriera S."/>
            <person name="Fleischmann W."/>
            <person name="Fosler C."/>
            <person name="Gabrielian A.E."/>
            <person name="Garg N.S."/>
            <person name="Gelbart W.M."/>
            <person name="Glasser K."/>
            <person name="Glodek A."/>
            <person name="Gong F."/>
            <person name="Gorrell J.H."/>
            <person name="Gu Z."/>
            <person name="Guan P."/>
            <person name="Harris M."/>
            <person name="Harris N.L."/>
            <person name="Harvey D.A."/>
            <person name="Heiman T.J."/>
            <person name="Hernandez J.R."/>
            <person name="Houck J."/>
            <person name="Hostin D."/>
            <person name="Houston K.A."/>
            <person name="Howland T.J."/>
            <person name="Wei M.-H."/>
            <person name="Ibegwam C."/>
            <person name="Jalali M."/>
            <person name="Kalush F."/>
            <person name="Karpen G.H."/>
            <person name="Ke Z."/>
            <person name="Kennison J.A."/>
            <person name="Ketchum K.A."/>
            <person name="Kimmel B.E."/>
            <person name="Kodira C.D."/>
            <person name="Kraft C.L."/>
            <person name="Kravitz S."/>
            <person name="Kulp D."/>
            <person name="Lai Z."/>
            <person name="Lasko P."/>
            <person name="Lei Y."/>
            <person name="Levitsky A.A."/>
            <person name="Li J.H."/>
            <person name="Li Z."/>
            <person name="Liang Y."/>
            <person name="Lin X."/>
            <person name="Liu X."/>
            <person name="Mattei B."/>
            <person name="McIntosh T.C."/>
            <person name="McLeod M.P."/>
            <person name="McPherson D."/>
            <person name="Merkulov G."/>
            <person name="Milshina N.V."/>
            <person name="Mobarry C."/>
            <person name="Morris J."/>
            <person name="Moshrefi A."/>
            <person name="Mount S.M."/>
            <person name="Moy M."/>
            <person name="Murphy B."/>
            <person name="Murphy L."/>
            <person name="Muzny D.M."/>
            <person name="Nelson D.L."/>
            <person name="Nelson D.R."/>
            <person name="Nelson K.A."/>
            <person name="Nixon K."/>
            <person name="Nusskern D.R."/>
            <person name="Pacleb J.M."/>
            <person name="Palazzolo M."/>
            <person name="Pittman G.S."/>
            <person name="Pan S."/>
            <person name="Pollard J."/>
            <person name="Puri V."/>
            <person name="Reese M.G."/>
            <person name="Reinert K."/>
            <person name="Remington K."/>
            <person name="Saunders R.D.C."/>
            <person name="Scheeler F."/>
            <person name="Shen H."/>
            <person name="Shue B.C."/>
            <person name="Siden-Kiamos I."/>
            <person name="Simpson M."/>
            <person name="Skupski M.P."/>
            <person name="Smith T.J."/>
            <person name="Spier E."/>
            <person name="Spradling A.C."/>
            <person name="Stapleton M."/>
            <person name="Strong R."/>
            <person name="Sun E."/>
            <person name="Svirskas R."/>
            <person name="Tector C."/>
            <person name="Turner R."/>
            <person name="Venter E."/>
            <person name="Wang A.H."/>
            <person name="Wang X."/>
            <person name="Wang Z.-Y."/>
            <person name="Wassarman D.A."/>
            <person name="Weinstock G.M."/>
            <person name="Weissenbach J."/>
            <person name="Williams S.M."/>
            <person name="Woodage T."/>
            <person name="Worley K.C."/>
            <person name="Wu D."/>
            <person name="Yang S."/>
            <person name="Yao Q.A."/>
            <person name="Ye J."/>
            <person name="Yeh R.-F."/>
            <person name="Zaveri J.S."/>
            <person name="Zhan M."/>
            <person name="Zhang G."/>
            <person name="Zhao Q."/>
            <person name="Zheng L."/>
            <person name="Zheng X.H."/>
            <person name="Zhong F.N."/>
            <person name="Zhong W."/>
            <person name="Zhou X."/>
            <person name="Zhu S.C."/>
            <person name="Zhu X."/>
            <person name="Smith H.O."/>
            <person name="Gibbs R.A."/>
            <person name="Myers E.W."/>
            <person name="Rubin G.M."/>
            <person name="Venter J.C."/>
        </authorList>
    </citation>
    <scope>NUCLEOTIDE SEQUENCE [LARGE SCALE GENOMIC DNA]</scope>
    <source>
        <strain>Berkeley</strain>
    </source>
</reference>
<reference key="3">
    <citation type="journal article" date="2002" name="Genome Biol.">
        <title>Annotation of the Drosophila melanogaster euchromatic genome: a systematic review.</title>
        <authorList>
            <person name="Misra S."/>
            <person name="Crosby M.A."/>
            <person name="Mungall C.J."/>
            <person name="Matthews B.B."/>
            <person name="Campbell K.S."/>
            <person name="Hradecky P."/>
            <person name="Huang Y."/>
            <person name="Kaminker J.S."/>
            <person name="Millburn G.H."/>
            <person name="Prochnik S.E."/>
            <person name="Smith C.D."/>
            <person name="Tupy J.L."/>
            <person name="Whitfield E.J."/>
            <person name="Bayraktaroglu L."/>
            <person name="Berman B.P."/>
            <person name="Bettencourt B.R."/>
            <person name="Celniker S.E."/>
            <person name="de Grey A.D.N.J."/>
            <person name="Drysdale R.A."/>
            <person name="Harris N.L."/>
            <person name="Richter J."/>
            <person name="Russo S."/>
            <person name="Schroeder A.J."/>
            <person name="Shu S.Q."/>
            <person name="Stapleton M."/>
            <person name="Yamada C."/>
            <person name="Ashburner M."/>
            <person name="Gelbart W.M."/>
            <person name="Rubin G.M."/>
            <person name="Lewis S.E."/>
        </authorList>
    </citation>
    <scope>GENOME REANNOTATION</scope>
    <scope>ALTERNATIVE SPLICING</scope>
    <source>
        <strain>Berkeley</strain>
    </source>
</reference>
<reference key="4">
    <citation type="journal article" date="1994" name="Mol. Biol. Cell">
        <title>A family of dynein genes in Drosophila melanogaster.</title>
        <authorList>
            <person name="Rasmusson K."/>
            <person name="Serr M."/>
            <person name="Gepner J."/>
            <person name="Gibbons I."/>
            <person name="Hays T.S."/>
        </authorList>
    </citation>
    <scope>NUCLEOTIDE SEQUENCE [MRNA] OF 1877-1998</scope>
</reference>
<reference key="5">
    <citation type="journal article" date="2002" name="Genome Biol.">
        <title>A Drosophila full-length cDNA resource.</title>
        <authorList>
            <person name="Stapleton M."/>
            <person name="Carlson J.W."/>
            <person name="Brokstein P."/>
            <person name="Yu C."/>
            <person name="Champe M."/>
            <person name="George R.A."/>
            <person name="Guarin H."/>
            <person name="Kronmiller B."/>
            <person name="Pacleb J.M."/>
            <person name="Park S."/>
            <person name="Wan K.H."/>
            <person name="Rubin G.M."/>
            <person name="Celniker S.E."/>
        </authorList>
    </citation>
    <scope>NUCLEOTIDE SEQUENCE [LARGE SCALE MRNA] OF 3758-4639 (ISOFORMS A/C)</scope>
    <source>
        <strain>Berkeley</strain>
        <tissue>Head</tissue>
    </source>
</reference>
<protein>
    <recommendedName>
        <fullName>Dynein heavy chain, cytoplasmic</fullName>
    </recommendedName>
    <alternativeName>
        <fullName>Dynein heavy chain, cytosolic</fullName>
        <shortName>DYHC</shortName>
    </alternativeName>
</protein>
<gene>
    <name type="primary">Dhc64C</name>
    <name type="synonym">cDhc</name>
    <name type="ORF">CG7507</name>
</gene>
<keyword id="KW-0025">Alternative splicing</keyword>
<keyword id="KW-0067">ATP-binding</keyword>
<keyword id="KW-0175">Coiled coil</keyword>
<keyword id="KW-0963">Cytoplasm</keyword>
<keyword id="KW-0206">Cytoskeleton</keyword>
<keyword id="KW-0243">Dynein</keyword>
<keyword id="KW-0493">Microtubule</keyword>
<keyword id="KW-0505">Motor protein</keyword>
<keyword id="KW-0547">Nucleotide-binding</keyword>
<keyword id="KW-1185">Reference proteome</keyword>
<keyword id="KW-0677">Repeat</keyword>
<name>DYHC_DROME</name>
<comment type="function">
    <text>Cytoplasmic dynein acts as a motor for the intracellular retrograde motility of vesicles and organelles along microtubules. Dynein has ATPase activity; the force-producing power stroke is thought to occur on release of ADP.</text>
</comment>
<comment type="subunit">
    <text>Consists of at least two heavy chains and a number of intermediate and light chains.</text>
</comment>
<comment type="subcellular location">
    <subcellularLocation>
        <location>Cytoplasm</location>
        <location>Cytoskeleton</location>
    </subcellularLocation>
</comment>
<comment type="alternative products">
    <event type="alternative splicing"/>
    <isoform>
        <id>P37276-1</id>
        <name>A</name>
        <sequence type="displayed"/>
    </isoform>
    <isoform>
        <id>P37276-2</id>
        <name>C</name>
        <sequence type="described" ref="VSP_012085"/>
    </isoform>
</comment>
<comment type="domain">
    <text>Dynein heavy chains probably consist of an N-terminal stem (which binds cargo and interacts with other dynein components), and the head or motor domain. The motor contains six tandemly-linked AAA domains in the head, which form a ring. A stalk-like structure (formed by two of the coiled coil domains) protrudes between AAA 4 and AAA 5 and terminates in a microtubule-binding site. A seventh domain may also contribute to this ring; it is not clear whether the N-terminus or the C-terminus forms this extra domain. There are four well-conserved and two non-conserved ATPase sites, one per AAA domain. Probably only one of these (within AAA 1) actually hydrolyzes ATP, the others may serve a regulatory function.</text>
</comment>
<comment type="similarity">
    <text evidence="3">Belongs to the dynein heavy chain family.</text>
</comment>
<comment type="sequence caution" evidence="3">
    <conflict type="erroneous initiation">
        <sequence resource="EMBL-CDS" id="AAK92925"/>
    </conflict>
</comment>
<sequence>MGDSLENPDTSVDPIVNLSIANYDAFANYLRKAVTILLPEDDVVPASLNDALDDPVNQDTIRKFLSDPQVQALYVQRNCIKEDDSEQPAEGEDEKEQVTYQISNDVHFTNSRMASLACIKRGLVVEADKSIHSQLRLINFSDGSPYETLHAFISKSLAPYFKSYVKESGRADRDGDKMAPSVEKKLAELEMGLLHLQQNIDIPEITLTAHQTVNNVIRKCAEENRKAKVADFGDKVEDSSFLNLLQNGVNRWIAEIKKVTKLNRDPGSGTALQEISFWLNLERALYRIQEKRESPEVALTLDILKHGKRFHATVSFDTDTGLKQALATVADYNPLMKDFPINDLLSATELEKIRPAVQQIFAHLRKVRNTKYPIQRCLKLIEAISRDLSQQLLKVLGTRRLMHIPFDEFERVMNQCFEIFSCWDDEYDKLQGLLRDIVKKKRDEHLKMVWRVSPAHKKLQTRMEHMRKFRRQHEQLRTVILRVLRPTKPAVGDDGNVVETKQPYSLDAADANAIEEVNLAYENVKEVDCLDITKEGSEAWEAAVKRYEEKIDRVETRITAHLRDQLGTAKNANEMFRIFSRFNALFVRPHIRGAIREYQTQLIQRVKDDIEALHEKFKVQYPQSKSCRLSSVRDLPPVAGSIIWARQIDNQLTMYLKRVEDVLGKGWETHIEGQKLKADGDSFRAKLSISDVFHEWARKVQERNFGSTGRIFTIESTRSRIGRGNVLRLRVNFLPEIITLAKEVRNIKNLGFRVPLTIVNKAHQANQIYPYAISLIESVRTYERTLEKIEDRASIVPLVAGLRKDVLNLVSEGIGLIWESYKLDPYVIRLSECVTQFQEKVDDLLVVEEQLDVDVRSLETCPYSAATFVEILSKIQHAVDDLSLRQYSNLSVWVTRLDEEVEKKLALRLQAGIQAWTEALTGNKKEVDTSMDTDAPAQPTHKLGGDPQIQNAVHEIRITNQQMYLYPSIEEARFQIMQQFFAWQAIVTSQVRLQSTRYQVGLEKHVSQTYRNLLTKLPEGKILENAYGAIEQKVSEVRNYVDEWLRYQSLWDLQADMLYGRLGEDVNLWIKCLNDIKQSRTTFDTSDTRRAYGPIIIDYAKVQAKVTLKYDSWHKEALGKFGTLLGTEMTSFHSKVSKSRTDLEMQSIEAASTSDAVSFITYVQSLKKDMIAWDKQVEVFREAQRILERQRFQFPNTWLHVDNIEGEWSAFNEIIKRKDTAIQTQVASLQAKIVAEDKAVETRTVDFLNDWEKTKPTGGKIRPDDALQQLQIFESKYSRLKEERDNVVKAKEALELQESAVPNNSAERMNVALEELQDLRGVWSELSKVWTQIDETREKPWLSVQPRKLRQQLEAMMAQLKELPARLRMYESYEYVKKLIQSYIKVNMLIVELKSDALKERHWKQLTKQLRVNWVLSDLSLGQVWDVNLQKNEGIVKDIILVAQGEMALEEFLKQVRESWQNYELDLINYQNKCRIIRGWDDLFNKVKEHINSVAAMKLSPYYKVFEEEALTWEEKLNRINALFDVWIDVQRRWVYLEGIFSGSADIKTLLPVETSRFQSISSEFLGLMKKVTKSPKVMDVLNIPAVQRSLERLADLLGKIQKALGEYLERERTSFPRFYFVGDEDLLEIIGNSKNIARLQKHFKKMFAGVAAILLNEENNVILGISSREGEEVHFMNPVSTVEHPKINEWLSLVEKQMRFTLASLLAQAVQDIKQFRDGKIDPQAYMEWCDKYQAQIVVLAAQILWSEDVESALQQASENNQSKPMQRVLGNVESTLNVLADSVLQEQPPLRRRKLEHLINEFVHKRTVTRRLLNNGVTSPKSFQWLCEMRFYFDPRQTEVLQQLTIHMANARFFYGFEYLGVQDRLVQTPLTDRCYLTMTQALESRLGGSPFGPAGTGKTESVKALGNQLGRFVLVFNCDETFDFQAMGRIFVGLCQVGAWGCFDEFNRLEERMLSACSQQIQTIQEALKYEMDSNKESITVELVGKQVRVSPDMAIFITMNPGYAGRSNLPDNLKKLFRSLAMTTPDRQLIAEVMLFSQGFRSAEKLACKIVPFFKLCDEQLSNQSHYDFGLRALKSVLISAGNVKRDRIMKIKEQMKQRGDENIDEASVAENLPEQEILIQSVCETMVPKLVAEDIPLLFSLLSDVFPNVGYTRAEMKGLKEEIRKVCQEDYLVCGEGDEQGAAWMEKVLQLYQISNLNHGLMMVGPSGSGKSTAWKTLLKALERFEGVEGVAHVIDPKAISKEALYGVLDPNTREWTDGLFTHILRKIIDNVRGEINKRQWIIFDGDVDPEWVENLNSVLDDNKLLTLPNGERLSLPPNVRVMFEVQDLKFATLATVSRCGMVWFSEDVLSTEMIFENYLSRLRSIPLEDGDEDFVGVIKPAKDKEEEVSPSLQVQRDIALLLLPFFSADGIVVRTLEYAMDQEHIMDFTRLRALSSLFSMLNQAARNVLTFNAQHPDFPCSADQLEHYIPKALVYSVLWSFAGDAKLKVRIDLGDFVRSVTTVPLPGAAGAPIIDYEVNMSGDWVPWSNKVPVIEVETHKVASPDIVVPTLDTVRHESLLYTWLAEHKPLVLCGPPGSGKTMTLFSALRALPDMEVVGLNFSSATTPELLLKTFDHYCEYRKTPNGVVLSPVQIGKWLVLFCDEINLPDMDSYGTQRVISFLRQLVEHKGFYRASDQAWVSLERIQFVGACNPPTDPGRKPLSHRFLRHVPIIYVDYPGETSLKQIYGTFSRAMLRLMPALRGYAEPLTNAMVEFYLASQDRFTQDMQPHYVYSPREMTRWVRGICEAIRPLDSLPVEGLVRLWAHEALRLFQDRLVDDSERRWTNENIDLVGQKHFPGINQEEALQRPILYSNWLSKDYMPVNREELREYVHARLKVFYEEELDVPLVLFDEVLDHVLRIDRIFRQPQGHLLLIGVSGAGKTTLSRFVAWMNGLSIFQIKVHNKYTSEDFDEDLRCVLRRSGCKDEKIAFILDESNVLDSGFLERMNTLLANGEVPGLFEGDEYTTLMTQCKEGAQREGLMLDSSDELYKWFTQQVMRNLHVVFTMNPSTDGLKDRAATSPALFNRCVLNWFGDWSDSALFQVGKEFTTRVDLEKPNWHAPDFFPSVCPLVPANPTHRDAVINSCVYVHQTLHQANARLAKRGGRTMAVTPRHYLDFIHHFVKLYNEKRSDLEEQQLHLNVGLNKIAETVEQVEEMQKSLAVKKQELQAKNEAANAKLKQMFQDQQEAEKKKIQSQEIQIRLADQTVKIEEKRKYVMADLAQVEPAVIDAQAAVKSIRKQQLVEVRTMANPPSVVKLALESICLLLGENATDWKSIRAVIMRENFINSIVSNFGTENITDDVREKMKSKYLSNPDYNFEKVNRASMACGPMVKWAIAQIEYADMLKRVEPLREELRSLEEQADVNLASAKETKDLVEQLERSIAAYKEEYAQLISQAQAIKTDLENVQAKVDRSIALLKSLNIERERWESTSETFKSQMSTIIGDVLLSAAFIAYGGYFDQHYRLNLFTTWSQHLQAASIQYRADIARTEYLSNPDERLRWQANALPTDDLCTENAIMLKRFNRYPLIIDPSGQATTFLLNEYAGKKITKTSFLDDSFRKNLESALRFGNPLLVQDVENYDPILNPVLNRELRRTGGRVLITLGDQDIDLSPSFVIFLSTRDPTVEFPPDICSRVTFVNFTVTRSSLQSQCLNQVLKAERPDIDEKRSDLLKLQGEFRLRLRQLEKSLLQALNDAKGKILDDDSVITTLETLKKEAYDINQKVDETDKVIAEIETVSQQYLPLSVACSNIYFTMDSLNQVHFLYQYSLKMFLDIFSTVLYNNPKLEGRTDHSERLGIVTRDLFQVCYERVARGMIHIDRLTFALLMCKIHLKGTSESNLDAEFNFFLRSREGLLANPTPVEGLSAEQIESVNRLALRLPIFRKLLEKVRSIPELGAWLQQSSPEQVVPQLWDESKALSPIASSVHQLLLIQAFRPDRVIAAAHNVVNTVLGEDFMPNAEQELDFTSVVDKQLNCNTPALLCSVPGFDASGRVDDLAAEQNKQISSIAIGSAEGFNQAERAINMACKTGRWVLLKNVHLAPQWLVQLEKKMHSLQPHSGFRLFLTMEINPKVPVNLLRAGRIFVFEPPPGIRANLLRTFSTVPAARMMKTPSERARLYFLLAWFHAIVQERLRYVPLGWAKKYEFNESDLRVACDTLDTWIDTTAMGRTNLPPEKVPWDALVTLLSQSIYGGKIDNDFDQRLLTSFLKKLFTARSFEADFALVANVDGASGGLRHITMPDGTRRDHFLKWIENLTDRQTPSWLGLPNNAEKVLLTTRGTDLVSKLLKMQQLEDDDELAYSVEDQSEQSAVGRGEDGRPSWMKTLHNSATAWLELLPKNLQVLKRTVENIKDPLYRYFEREVTSGSRLLQTVILDLQDVVLICQGEKKQTNHHRSMLSELVRGIIPKGWKRYTVPAGCTVIQWITDFSNRVQQLQKVSQLVSQAGAKELQGFPVWLGGLLNPEAYITATRQCVAQANSWSLEELALDVTITDAGLKNDQKDCCFGVTGLKLQGAQCKNNELLLASTIMMDLPVTILKWIKISSEPRISKLTLPVYLNSTRTELLFTVDLAVAAGQESHSFYERGVAVLTSTALN</sequence>